<reference key="1">
    <citation type="journal article" date="2006" name="PLoS Genet.">
        <title>The complete genome sequence and comparative genome analysis of the high pathogenicity Yersinia enterocolitica strain 8081.</title>
        <authorList>
            <person name="Thomson N.R."/>
            <person name="Howard S."/>
            <person name="Wren B.W."/>
            <person name="Holden M.T.G."/>
            <person name="Crossman L."/>
            <person name="Challis G.L."/>
            <person name="Churcher C."/>
            <person name="Mungall K."/>
            <person name="Brooks K."/>
            <person name="Chillingworth T."/>
            <person name="Feltwell T."/>
            <person name="Abdellah Z."/>
            <person name="Hauser H."/>
            <person name="Jagels K."/>
            <person name="Maddison M."/>
            <person name="Moule S."/>
            <person name="Sanders M."/>
            <person name="Whitehead S."/>
            <person name="Quail M.A."/>
            <person name="Dougan G."/>
            <person name="Parkhill J."/>
            <person name="Prentice M.B."/>
        </authorList>
    </citation>
    <scope>NUCLEOTIDE SEQUENCE [LARGE SCALE GENOMIC DNA]</scope>
    <source>
        <strain>NCTC 13174 / 8081</strain>
    </source>
</reference>
<accession>A1JP82</accession>
<sequence length="241" mass="26893">MATVSMRDMLQAGVHFGHQTRYWNPKMKPFIFGARNKVHIINLEKTVPLFNEALAELKKISSRKGKILFVGTKRAASEAVKEAANNCDQFFVNHRWLGGMLTNWKTVRQSIKRLKDLEIQSQDGTFDKLTKKEALMRTRELNKLENSLGGIKDMGGLPDALFVVDADHEHIAIKEANNLGIPVFSIVDTNSDPDGVDFIIPGNDDAIRAVKLYLNAVADAVKEGRSQDLAVQAEESFVEAE</sequence>
<dbReference type="EMBL" id="AM286415">
    <property type="protein sequence ID" value="CAL13314.1"/>
    <property type="molecule type" value="Genomic_DNA"/>
</dbReference>
<dbReference type="RefSeq" id="WP_005164055.1">
    <property type="nucleotide sequence ID" value="NC_008800.1"/>
</dbReference>
<dbReference type="RefSeq" id="YP_001007458.1">
    <property type="nucleotide sequence ID" value="NC_008800.1"/>
</dbReference>
<dbReference type="SMR" id="A1JP82"/>
<dbReference type="GeneID" id="31412011"/>
<dbReference type="KEGG" id="yen:YE3284"/>
<dbReference type="PATRIC" id="fig|393305.7.peg.3493"/>
<dbReference type="eggNOG" id="COG0052">
    <property type="taxonomic scope" value="Bacteria"/>
</dbReference>
<dbReference type="HOGENOM" id="CLU_040318_1_0_6"/>
<dbReference type="OrthoDB" id="9808036at2"/>
<dbReference type="Proteomes" id="UP000000642">
    <property type="component" value="Chromosome"/>
</dbReference>
<dbReference type="GO" id="GO:0022627">
    <property type="term" value="C:cytosolic small ribosomal subunit"/>
    <property type="evidence" value="ECO:0007669"/>
    <property type="project" value="TreeGrafter"/>
</dbReference>
<dbReference type="GO" id="GO:0003735">
    <property type="term" value="F:structural constituent of ribosome"/>
    <property type="evidence" value="ECO:0007669"/>
    <property type="project" value="InterPro"/>
</dbReference>
<dbReference type="GO" id="GO:0006412">
    <property type="term" value="P:translation"/>
    <property type="evidence" value="ECO:0007669"/>
    <property type="project" value="UniProtKB-UniRule"/>
</dbReference>
<dbReference type="CDD" id="cd01425">
    <property type="entry name" value="RPS2"/>
    <property type="match status" value="1"/>
</dbReference>
<dbReference type="FunFam" id="1.10.287.610:FF:000001">
    <property type="entry name" value="30S ribosomal protein S2"/>
    <property type="match status" value="1"/>
</dbReference>
<dbReference type="Gene3D" id="3.40.50.10490">
    <property type="entry name" value="Glucose-6-phosphate isomerase like protein, domain 1"/>
    <property type="match status" value="1"/>
</dbReference>
<dbReference type="Gene3D" id="1.10.287.610">
    <property type="entry name" value="Helix hairpin bin"/>
    <property type="match status" value="1"/>
</dbReference>
<dbReference type="HAMAP" id="MF_00291_B">
    <property type="entry name" value="Ribosomal_uS2_B"/>
    <property type="match status" value="1"/>
</dbReference>
<dbReference type="InterPro" id="IPR001865">
    <property type="entry name" value="Ribosomal_uS2"/>
</dbReference>
<dbReference type="InterPro" id="IPR005706">
    <property type="entry name" value="Ribosomal_uS2_bac/mit/plastid"/>
</dbReference>
<dbReference type="InterPro" id="IPR018130">
    <property type="entry name" value="Ribosomal_uS2_CS"/>
</dbReference>
<dbReference type="InterPro" id="IPR023591">
    <property type="entry name" value="Ribosomal_uS2_flav_dom_sf"/>
</dbReference>
<dbReference type="NCBIfam" id="TIGR01011">
    <property type="entry name" value="rpsB_bact"/>
    <property type="match status" value="1"/>
</dbReference>
<dbReference type="PANTHER" id="PTHR12534">
    <property type="entry name" value="30S RIBOSOMAL PROTEIN S2 PROKARYOTIC AND ORGANELLAR"/>
    <property type="match status" value="1"/>
</dbReference>
<dbReference type="PANTHER" id="PTHR12534:SF0">
    <property type="entry name" value="SMALL RIBOSOMAL SUBUNIT PROTEIN US2M"/>
    <property type="match status" value="1"/>
</dbReference>
<dbReference type="Pfam" id="PF00318">
    <property type="entry name" value="Ribosomal_S2"/>
    <property type="match status" value="1"/>
</dbReference>
<dbReference type="PRINTS" id="PR00395">
    <property type="entry name" value="RIBOSOMALS2"/>
</dbReference>
<dbReference type="SUPFAM" id="SSF52313">
    <property type="entry name" value="Ribosomal protein S2"/>
    <property type="match status" value="1"/>
</dbReference>
<dbReference type="PROSITE" id="PS00962">
    <property type="entry name" value="RIBOSOMAL_S2_1"/>
    <property type="match status" value="1"/>
</dbReference>
<dbReference type="PROSITE" id="PS00963">
    <property type="entry name" value="RIBOSOMAL_S2_2"/>
    <property type="match status" value="1"/>
</dbReference>
<gene>
    <name evidence="1" type="primary">rpsB</name>
    <name type="ordered locus">YE3284</name>
</gene>
<comment type="similarity">
    <text evidence="1">Belongs to the universal ribosomal protein uS2 family.</text>
</comment>
<feature type="chain" id="PRO_1000004116" description="Small ribosomal subunit protein uS2">
    <location>
        <begin position="1"/>
        <end position="241"/>
    </location>
</feature>
<evidence type="ECO:0000255" key="1">
    <source>
        <dbReference type="HAMAP-Rule" id="MF_00291"/>
    </source>
</evidence>
<evidence type="ECO:0000305" key="2"/>
<organism>
    <name type="scientific">Yersinia enterocolitica serotype O:8 / biotype 1B (strain NCTC 13174 / 8081)</name>
    <dbReference type="NCBI Taxonomy" id="393305"/>
    <lineage>
        <taxon>Bacteria</taxon>
        <taxon>Pseudomonadati</taxon>
        <taxon>Pseudomonadota</taxon>
        <taxon>Gammaproteobacteria</taxon>
        <taxon>Enterobacterales</taxon>
        <taxon>Yersiniaceae</taxon>
        <taxon>Yersinia</taxon>
    </lineage>
</organism>
<protein>
    <recommendedName>
        <fullName evidence="1">Small ribosomal subunit protein uS2</fullName>
    </recommendedName>
    <alternativeName>
        <fullName evidence="2">30S ribosomal protein S2</fullName>
    </alternativeName>
</protein>
<name>RS2_YERE8</name>
<keyword id="KW-0687">Ribonucleoprotein</keyword>
<keyword id="KW-0689">Ribosomal protein</keyword>
<proteinExistence type="inferred from homology"/>